<comment type="function">
    <text evidence="2">Single-component hydroxylase that is part of the gamma-resorcylate (GRA) degradation pathway. GRA is initially converted by GRA decarboxylase to resorcinol, which is hydroxylated by resorcinol 4-hydroxylase.</text>
</comment>
<comment type="catalytic activity">
    <reaction evidence="2">
        <text>resorcinol + NADH + O2 + H(+) = benzene-1,2,4-triol + NAD(+) + H2O</text>
        <dbReference type="Rhea" id="RHEA:49684"/>
        <dbReference type="ChEBI" id="CHEBI:15377"/>
        <dbReference type="ChEBI" id="CHEBI:15378"/>
        <dbReference type="ChEBI" id="CHEBI:15379"/>
        <dbReference type="ChEBI" id="CHEBI:16971"/>
        <dbReference type="ChEBI" id="CHEBI:27810"/>
        <dbReference type="ChEBI" id="CHEBI:57540"/>
        <dbReference type="ChEBI" id="CHEBI:57945"/>
        <dbReference type="EC" id="1.14.13.220"/>
    </reaction>
    <physiologicalReaction direction="left-to-right" evidence="1">
        <dbReference type="Rhea" id="RHEA:49685"/>
    </physiologicalReaction>
</comment>
<comment type="disruption phenotype">
    <text evidence="1">The mutant bacteria is unable to grow on GRA (PubMed:26319878). Only 25% of the resorcinol is degraded compared to wild-type (PubMed:26319878).</text>
</comment>
<feature type="chain" id="PRO_0000446130" description="Probable NADH-specific resorcinol 4-hydroxylase">
    <location>
        <begin position="1"/>
        <end position="530"/>
    </location>
</feature>
<keyword id="KW-0520">NAD</keyword>
<keyword id="KW-0560">Oxidoreductase</keyword>
<evidence type="ECO:0000269" key="1">
    <source>
    </source>
</evidence>
<evidence type="ECO:0000305" key="2">
    <source>
    </source>
</evidence>
<evidence type="ECO:0000312" key="3">
    <source>
        <dbReference type="EMBL" id="ABG93671.1"/>
    </source>
</evidence>
<name>TSDB_RHOJR</name>
<organism>
    <name type="scientific">Rhodococcus jostii (strain RHA1)</name>
    <dbReference type="NCBI Taxonomy" id="101510"/>
    <lineage>
        <taxon>Bacteria</taxon>
        <taxon>Bacillati</taxon>
        <taxon>Actinomycetota</taxon>
        <taxon>Actinomycetes</taxon>
        <taxon>Mycobacteriales</taxon>
        <taxon>Nocardiaceae</taxon>
        <taxon>Rhodococcus</taxon>
    </lineage>
</organism>
<protein>
    <recommendedName>
        <fullName>Probable NADH-specific resorcinol 4-hydroxylase</fullName>
        <ecNumber evidence="2">1.14.13.220</ecNumber>
    </recommendedName>
</protein>
<accession>Q0SFL5</accession>
<proteinExistence type="evidence at protein level"/>
<sequence>MSAFAQPPGAGRKAVDVAIVGSGPTGMALAALLGCQGRSVVVLERYTGLYNLPRAAAFDDETMRTFQKLGVAEKMLPGTNVQRGYVWVNGDDEVLLDIEFDNPGRCGWPAQYMMYQPHLESVLDELITSLPTVEIRRGMTVESVDQQDGDDVLVRATDVEGSAYLVRARYVVGCDGGNGVVRQFAGGELDDYGFFENWLVCDFQLNRDVPDLPTFRQVCDPAEPIAIVNIGPRFHRFSFRLESAANREEVVHPDKVWPRVATYLTPEDAELVRVANYTFRSCITTQWRHRRILLAGDAAHQMPPFLAQGMVSGIRDARNLAWKLDMVLAGHPDSLLDTYQAEREPHVRYITEKAIELGRVQTMRDTALAAQRDAQMIAARKANQKPDKLRYPALSGGLIANHGDMFPQGLVSTSSTTALFDEIAGTGWLVVADGPQVLSGIAEGDRTAFTEIGGKEVIFGLTSMFDGAPVSDTAGVYTRWFAAHECVAAIVRPDGYVFGLARDAAELAGLAKELVAAVAPVPSRPPAPTA</sequence>
<gene>
    <name type="primary">tsdB</name>
    <name evidence="3" type="ordered locus">RHA1_ro01860</name>
</gene>
<reference key="1">
    <citation type="journal article" date="2006" name="Proc. Natl. Acad. Sci. U.S.A.">
        <title>The complete genome of Rhodococcus sp. RHA1 provides insights into a catabolic powerhouse.</title>
        <authorList>
            <person name="McLeod M.P."/>
            <person name="Warren R.L."/>
            <person name="Hsiao W.W.L."/>
            <person name="Araki N."/>
            <person name="Myhre M."/>
            <person name="Fernandes C."/>
            <person name="Miyazawa D."/>
            <person name="Wong W."/>
            <person name="Lillquist A.L."/>
            <person name="Wang D."/>
            <person name="Dosanjh M."/>
            <person name="Hara H."/>
            <person name="Petrescu A."/>
            <person name="Morin R.D."/>
            <person name="Yang G."/>
            <person name="Stott J.M."/>
            <person name="Schein J.E."/>
            <person name="Shin H."/>
            <person name="Smailus D."/>
            <person name="Siddiqui A.S."/>
            <person name="Marra M.A."/>
            <person name="Jones S.J.M."/>
            <person name="Holt R."/>
            <person name="Brinkman F.S.L."/>
            <person name="Miyauchi K."/>
            <person name="Fukuda M."/>
            <person name="Davies J.E."/>
            <person name="Mohn W.W."/>
            <person name="Eltis L.D."/>
        </authorList>
    </citation>
    <scope>NUCLEOTIDE SEQUENCE [LARGE SCALE GENOMIC DNA]</scope>
    <source>
        <strain>RHA1</strain>
    </source>
</reference>
<reference key="2">
    <citation type="journal article" date="2015" name="Appl. Environ. Microbiol.">
        <title>Gamma-Resorcylate catabolic-pathway genes in the soil actinomycete Rhodococcus jostii RHA1.</title>
        <authorList>
            <person name="Kasai D."/>
            <person name="Araki N."/>
            <person name="Motoi K."/>
            <person name="Yoshikawa S."/>
            <person name="Iino T."/>
            <person name="Imai S."/>
            <person name="Masai E."/>
            <person name="Fukuda M."/>
        </authorList>
    </citation>
    <scope>FUNCTION</scope>
    <scope>CATALYTIC ACTIVITY</scope>
    <scope>DISRUPTION PHENOTYPE</scope>
</reference>
<dbReference type="EC" id="1.14.13.220" evidence="2"/>
<dbReference type="EMBL" id="CP000431">
    <property type="protein sequence ID" value="ABG93671.1"/>
    <property type="molecule type" value="Genomic_DNA"/>
</dbReference>
<dbReference type="RefSeq" id="WP_011594777.1">
    <property type="nucleotide sequence ID" value="NC_008268.1"/>
</dbReference>
<dbReference type="SMR" id="Q0SFL5"/>
<dbReference type="KEGG" id="rha:RHA1_ro01860"/>
<dbReference type="PATRIC" id="fig|101510.16.peg.1881"/>
<dbReference type="eggNOG" id="COG0654">
    <property type="taxonomic scope" value="Bacteria"/>
</dbReference>
<dbReference type="HOGENOM" id="CLU_009665_20_2_11"/>
<dbReference type="OrthoDB" id="8670884at2"/>
<dbReference type="BioCyc" id="MetaCyc:MONOMER-19788"/>
<dbReference type="Proteomes" id="UP000008710">
    <property type="component" value="Chromosome"/>
</dbReference>
<dbReference type="GO" id="GO:0008688">
    <property type="term" value="F:3-(3-hydroxyphenyl)propionate hydroxylase activity"/>
    <property type="evidence" value="ECO:0007669"/>
    <property type="project" value="TreeGrafter"/>
</dbReference>
<dbReference type="GO" id="GO:0071949">
    <property type="term" value="F:FAD binding"/>
    <property type="evidence" value="ECO:0007669"/>
    <property type="project" value="InterPro"/>
</dbReference>
<dbReference type="GO" id="GO:0051287">
    <property type="term" value="F:NAD binding"/>
    <property type="evidence" value="ECO:0000314"/>
    <property type="project" value="UniProtKB"/>
</dbReference>
<dbReference type="GO" id="GO:0019622">
    <property type="term" value="P:3-(3-hydroxy)phenylpropionate catabolic process"/>
    <property type="evidence" value="ECO:0007669"/>
    <property type="project" value="TreeGrafter"/>
</dbReference>
<dbReference type="GO" id="GO:0019505">
    <property type="term" value="P:resorcinol metabolic process"/>
    <property type="evidence" value="ECO:0000314"/>
    <property type="project" value="UniProtKB"/>
</dbReference>
<dbReference type="Gene3D" id="3.30.70.2450">
    <property type="match status" value="1"/>
</dbReference>
<dbReference type="Gene3D" id="3.50.50.60">
    <property type="entry name" value="FAD/NAD(P)-binding domain"/>
    <property type="match status" value="1"/>
</dbReference>
<dbReference type="InterPro" id="IPR002938">
    <property type="entry name" value="FAD-bd"/>
</dbReference>
<dbReference type="InterPro" id="IPR036188">
    <property type="entry name" value="FAD/NAD-bd_sf"/>
</dbReference>
<dbReference type="InterPro" id="IPR050631">
    <property type="entry name" value="PheA/TfdB_FAD_monoxygenase"/>
</dbReference>
<dbReference type="NCBIfam" id="NF004829">
    <property type="entry name" value="PRK06183.1-3"/>
    <property type="match status" value="1"/>
</dbReference>
<dbReference type="PANTHER" id="PTHR43476">
    <property type="entry name" value="3-(3-HYDROXY-PHENYL)PROPIONATE/3-HYDROXYCINNAMIC ACID HYDROXYLASE"/>
    <property type="match status" value="1"/>
</dbReference>
<dbReference type="PANTHER" id="PTHR43476:SF3">
    <property type="entry name" value="FAD-BINDING MONOOXYGENASE"/>
    <property type="match status" value="1"/>
</dbReference>
<dbReference type="Pfam" id="PF01494">
    <property type="entry name" value="FAD_binding_3"/>
    <property type="match status" value="1"/>
</dbReference>
<dbReference type="PRINTS" id="PR00420">
    <property type="entry name" value="RNGMNOXGNASE"/>
</dbReference>
<dbReference type="SUPFAM" id="SSF51905">
    <property type="entry name" value="FAD/NAD(P)-binding domain"/>
    <property type="match status" value="1"/>
</dbReference>